<sequence length="578" mass="65959">MLSCNICGETVTSEPDMKAHLIVHMESEIICPFCKLSGVNYDEMCFHIETAHFEQNTLERNFERINTVQYGTSDNKKDNTLQCGMEVNSSILSGCASNHPKNSAQNLTKDSTLKHEGFYSENLTESRKFLKSREKQSSLTEIKGSVYETTYSPPECPFCGKIEEHSEDMETHVKTKHANLLDIPLEDCDQPLYDCPMCGLICTNYHILQEHVDLHLEENSFQQGMDRVQCSGDLQLAHQLQQEEDRKRRSEESRQEIEEFQKLQRQYGLDNSGGYKQQQLRNMEIEVNRGRMPPSEFHRRKADMMESLALGFDDGKTKTSGIIEALHRYYQNAATDVRRVWLSSVVDHFHSSLGDKGWGCGYRNFQMLLSSLLQNDAYNDCLKGMLIPCIPKIQSMIEDAWKEGFDPQGASQLNNRLQGTKAWIGACEVYILLTSLRVKCHIVDFHKSTGPLGTHPRLFEWILNYYSSEGEGSPKVVCTSKPPIYLQHQGHSRTVIGIEEKKNRTLCLLILDPGCPSREMQKLLKQDIEASSLKQLRKSMGNLKHKQYQILAVEGALSLEEKLARRQASQVFTAEKIP</sequence>
<protein>
    <recommendedName>
        <fullName evidence="9">Zinc finger-containing ubiquitin peptidase 1</fullName>
        <ecNumber evidence="4">3.4.19.12</ecNumber>
    </recommendedName>
    <alternativeName>
        <fullName>Lys-63-specific deubiquitinase ZUFSP</fullName>
        <shortName>DUB</shortName>
    </alternativeName>
    <alternativeName>
        <fullName>Zinc finger with UFM1-specific peptidase domain protein</fullName>
    </alternativeName>
</protein>
<feature type="chain" id="PRO_0000244336" description="Zinc finger-containing ubiquitin peptidase 1">
    <location>
        <begin position="1"/>
        <end position="578"/>
    </location>
</feature>
<feature type="zinc finger region" description="C2H2-type 1" evidence="2">
    <location>
        <begin position="2"/>
        <end position="24"/>
    </location>
</feature>
<feature type="zinc finger region" description="C2H2-type 2; atypical" evidence="10">
    <location>
        <begin position="29"/>
        <end position="52"/>
    </location>
</feature>
<feature type="zinc finger region" description="C2H2-type 3" evidence="2">
    <location>
        <begin position="154"/>
        <end position="177"/>
    </location>
</feature>
<feature type="zinc finger region" description="C2H2-type 4" evidence="2">
    <location>
        <begin position="193"/>
        <end position="215"/>
    </location>
</feature>
<feature type="region of interest" description="MIU" evidence="10 11">
    <location>
        <begin position="226"/>
        <end position="248"/>
    </location>
</feature>
<feature type="region of interest" description="zUBD/ZHA" evidence="10 11">
    <location>
        <begin position="249"/>
        <end position="274"/>
    </location>
</feature>
<feature type="active site" description="Nucleophile" evidence="10">
    <location>
        <position position="360"/>
    </location>
</feature>
<feature type="active site" description="Proton acceptor" evidence="10">
    <location>
        <position position="491"/>
    </location>
</feature>
<feature type="active site" evidence="1">
    <location>
        <position position="512"/>
    </location>
</feature>
<feature type="site" description="Involved in the stabilization of negative charge on the oxyanion by the formation of the oxyanion hole" evidence="11">
    <location>
        <position position="487"/>
    </location>
</feature>
<feature type="modified residue" description="N6-acetyllysine" evidence="13">
    <location>
        <position position="262"/>
    </location>
</feature>
<feature type="splice variant" id="VSP_019533" description="In isoform 2." evidence="8">
    <location>
        <begin position="1"/>
        <end position="519"/>
    </location>
</feature>
<feature type="sequence variant" id="VAR_026889" description="In dbSNP:rs4946188." evidence="3">
    <original>N</original>
    <variation>D</variation>
    <location>
        <position position="379"/>
    </location>
</feature>
<feature type="mutagenesis site" description="No effect." evidence="4">
    <original>S</original>
    <variation>A</variation>
    <variation>Q</variation>
    <variation>Y</variation>
    <location>
        <position position="351"/>
    </location>
</feature>
<feature type="mutagenesis site" description="Loss of catalytic activity." evidence="4 5 6 7">
    <original>C</original>
    <variation>A</variation>
    <location>
        <position position="360"/>
    </location>
</feature>
<feature type="mutagenesis site" description="Loss of catalytic activity." evidence="4">
    <original>D</original>
    <variation>A</variation>
    <location>
        <position position="406"/>
    </location>
</feature>
<feature type="mutagenesis site" description="Loss of catalytic activity." evidence="4">
    <original>E</original>
    <variation>A</variation>
    <location>
        <position position="428"/>
    </location>
</feature>
<feature type="mutagenesis site" description="Loss of catalytic activity." evidence="6">
    <original>Q</original>
    <variation>A</variation>
    <location>
        <position position="487"/>
    </location>
</feature>
<feature type="mutagenesis site" description="Loss of catalytic activity." evidence="4 5 6">
    <original>H</original>
    <variation>A</variation>
    <location>
        <position position="491"/>
    </location>
</feature>
<feature type="mutagenesis site" description="Loss of catalytic activity." evidence="6">
    <original>D</original>
    <variation>A</variation>
    <location>
        <position position="512"/>
    </location>
</feature>
<feature type="helix" evidence="14">
    <location>
        <begin position="241"/>
        <end position="266"/>
    </location>
</feature>
<feature type="helix" evidence="14">
    <location>
        <begin position="275"/>
        <end position="288"/>
    </location>
</feature>
<feature type="helix" evidence="14">
    <location>
        <begin position="294"/>
        <end position="310"/>
    </location>
</feature>
<feature type="helix" evidence="14">
    <location>
        <begin position="322"/>
        <end position="332"/>
    </location>
</feature>
<feature type="strand" evidence="14">
    <location>
        <begin position="336"/>
        <end position="342"/>
    </location>
</feature>
<feature type="turn" evidence="14">
    <location>
        <begin position="353"/>
        <end position="358"/>
    </location>
</feature>
<feature type="helix" evidence="14">
    <location>
        <begin position="360"/>
        <end position="373"/>
    </location>
</feature>
<feature type="helix" evidence="14">
    <location>
        <begin position="376"/>
        <end position="378"/>
    </location>
</feature>
<feature type="helix" evidence="14">
    <location>
        <begin position="379"/>
        <end position="382"/>
    </location>
</feature>
<feature type="helix" evidence="14">
    <location>
        <begin position="390"/>
        <end position="403"/>
    </location>
</feature>
<feature type="helix" evidence="14">
    <location>
        <begin position="407"/>
        <end position="412"/>
    </location>
</feature>
<feature type="turn" evidence="14">
    <location>
        <begin position="413"/>
        <end position="415"/>
    </location>
</feature>
<feature type="helix" evidence="14">
    <location>
        <begin position="426"/>
        <end position="435"/>
    </location>
</feature>
<feature type="strand" evidence="14">
    <location>
        <begin position="438"/>
        <end position="445"/>
    </location>
</feature>
<feature type="helix" evidence="14">
    <location>
        <begin position="451"/>
        <end position="453"/>
    </location>
</feature>
<feature type="helix" evidence="14">
    <location>
        <begin position="456"/>
        <end position="466"/>
    </location>
</feature>
<feature type="strand" evidence="14">
    <location>
        <begin position="475"/>
        <end position="478"/>
    </location>
</feature>
<feature type="strand" evidence="14">
    <location>
        <begin position="484"/>
        <end position="488"/>
    </location>
</feature>
<feature type="strand" evidence="14">
    <location>
        <begin position="491"/>
        <end position="501"/>
    </location>
</feature>
<feature type="strand" evidence="14">
    <location>
        <begin position="506"/>
        <end position="511"/>
    </location>
</feature>
<feature type="helix" evidence="14">
    <location>
        <begin position="517"/>
        <end position="520"/>
    </location>
</feature>
<feature type="helix" evidence="14">
    <location>
        <begin position="521"/>
        <end position="524"/>
    </location>
</feature>
<feature type="strand" evidence="14">
    <location>
        <begin position="525"/>
        <end position="527"/>
    </location>
</feature>
<feature type="helix" evidence="14">
    <location>
        <begin position="530"/>
        <end position="533"/>
    </location>
</feature>
<feature type="turn" evidence="14">
    <location>
        <begin position="534"/>
        <end position="536"/>
    </location>
</feature>
<feature type="helix" evidence="14">
    <location>
        <begin position="540"/>
        <end position="542"/>
    </location>
</feature>
<feature type="strand" evidence="14">
    <location>
        <begin position="548"/>
        <end position="556"/>
    </location>
</feature>
<feature type="helix" evidence="14">
    <location>
        <begin position="559"/>
        <end position="568"/>
    </location>
</feature>
<feature type="strand" evidence="14">
    <location>
        <begin position="575"/>
        <end position="577"/>
    </location>
</feature>
<keyword id="KW-0002">3D-structure</keyword>
<keyword id="KW-0007">Acetylation</keyword>
<keyword id="KW-0025">Alternative splicing</keyword>
<keyword id="KW-0963">Cytoplasm</keyword>
<keyword id="KW-0378">Hydrolase</keyword>
<keyword id="KW-0479">Metal-binding</keyword>
<keyword id="KW-0539">Nucleus</keyword>
<keyword id="KW-1267">Proteomics identification</keyword>
<keyword id="KW-1185">Reference proteome</keyword>
<keyword id="KW-0677">Repeat</keyword>
<keyword id="KW-0862">Zinc</keyword>
<keyword id="KW-0863">Zinc-finger</keyword>
<organism>
    <name type="scientific">Homo sapiens</name>
    <name type="common">Human</name>
    <dbReference type="NCBI Taxonomy" id="9606"/>
    <lineage>
        <taxon>Eukaryota</taxon>
        <taxon>Metazoa</taxon>
        <taxon>Chordata</taxon>
        <taxon>Craniata</taxon>
        <taxon>Vertebrata</taxon>
        <taxon>Euteleostomi</taxon>
        <taxon>Mammalia</taxon>
        <taxon>Eutheria</taxon>
        <taxon>Euarchontoglires</taxon>
        <taxon>Primates</taxon>
        <taxon>Haplorrhini</taxon>
        <taxon>Catarrhini</taxon>
        <taxon>Hominidae</taxon>
        <taxon>Homo</taxon>
    </lineage>
</organism>
<reference key="1">
    <citation type="journal article" date="2004" name="Nat. Genet.">
        <title>Complete sequencing and characterization of 21,243 full-length human cDNAs.</title>
        <authorList>
            <person name="Ota T."/>
            <person name="Suzuki Y."/>
            <person name="Nishikawa T."/>
            <person name="Otsuki T."/>
            <person name="Sugiyama T."/>
            <person name="Irie R."/>
            <person name="Wakamatsu A."/>
            <person name="Hayashi K."/>
            <person name="Sato H."/>
            <person name="Nagai K."/>
            <person name="Kimura K."/>
            <person name="Makita H."/>
            <person name="Sekine M."/>
            <person name="Obayashi M."/>
            <person name="Nishi T."/>
            <person name="Shibahara T."/>
            <person name="Tanaka T."/>
            <person name="Ishii S."/>
            <person name="Yamamoto J."/>
            <person name="Saito K."/>
            <person name="Kawai Y."/>
            <person name="Isono Y."/>
            <person name="Nakamura Y."/>
            <person name="Nagahari K."/>
            <person name="Murakami K."/>
            <person name="Yasuda T."/>
            <person name="Iwayanagi T."/>
            <person name="Wagatsuma M."/>
            <person name="Shiratori A."/>
            <person name="Sudo H."/>
            <person name="Hosoiri T."/>
            <person name="Kaku Y."/>
            <person name="Kodaira H."/>
            <person name="Kondo H."/>
            <person name="Sugawara M."/>
            <person name="Takahashi M."/>
            <person name="Kanda K."/>
            <person name="Yokoi T."/>
            <person name="Furuya T."/>
            <person name="Kikkawa E."/>
            <person name="Omura Y."/>
            <person name="Abe K."/>
            <person name="Kamihara K."/>
            <person name="Katsuta N."/>
            <person name="Sato K."/>
            <person name="Tanikawa M."/>
            <person name="Yamazaki M."/>
            <person name="Ninomiya K."/>
            <person name="Ishibashi T."/>
            <person name="Yamashita H."/>
            <person name="Murakawa K."/>
            <person name="Fujimori K."/>
            <person name="Tanai H."/>
            <person name="Kimata M."/>
            <person name="Watanabe M."/>
            <person name="Hiraoka S."/>
            <person name="Chiba Y."/>
            <person name="Ishida S."/>
            <person name="Ono Y."/>
            <person name="Takiguchi S."/>
            <person name="Watanabe S."/>
            <person name="Yosida M."/>
            <person name="Hotuta T."/>
            <person name="Kusano J."/>
            <person name="Kanehori K."/>
            <person name="Takahashi-Fujii A."/>
            <person name="Hara H."/>
            <person name="Tanase T.-O."/>
            <person name="Nomura Y."/>
            <person name="Togiya S."/>
            <person name="Komai F."/>
            <person name="Hara R."/>
            <person name="Takeuchi K."/>
            <person name="Arita M."/>
            <person name="Imose N."/>
            <person name="Musashino K."/>
            <person name="Yuuki H."/>
            <person name="Oshima A."/>
            <person name="Sasaki N."/>
            <person name="Aotsuka S."/>
            <person name="Yoshikawa Y."/>
            <person name="Matsunawa H."/>
            <person name="Ichihara T."/>
            <person name="Shiohata N."/>
            <person name="Sano S."/>
            <person name="Moriya S."/>
            <person name="Momiyama H."/>
            <person name="Satoh N."/>
            <person name="Takami S."/>
            <person name="Terashima Y."/>
            <person name="Suzuki O."/>
            <person name="Nakagawa S."/>
            <person name="Senoh A."/>
            <person name="Mizoguchi H."/>
            <person name="Goto Y."/>
            <person name="Shimizu F."/>
            <person name="Wakebe H."/>
            <person name="Hishigaki H."/>
            <person name="Watanabe T."/>
            <person name="Sugiyama A."/>
            <person name="Takemoto M."/>
            <person name="Kawakami B."/>
            <person name="Yamazaki M."/>
            <person name="Watanabe K."/>
            <person name="Kumagai A."/>
            <person name="Itakura S."/>
            <person name="Fukuzumi Y."/>
            <person name="Fujimori Y."/>
            <person name="Komiyama M."/>
            <person name="Tashiro H."/>
            <person name="Tanigami A."/>
            <person name="Fujiwara T."/>
            <person name="Ono T."/>
            <person name="Yamada K."/>
            <person name="Fujii Y."/>
            <person name="Ozaki K."/>
            <person name="Hirao M."/>
            <person name="Ohmori Y."/>
            <person name="Kawabata A."/>
            <person name="Hikiji T."/>
            <person name="Kobatake N."/>
            <person name="Inagaki H."/>
            <person name="Ikema Y."/>
            <person name="Okamoto S."/>
            <person name="Okitani R."/>
            <person name="Kawakami T."/>
            <person name="Noguchi S."/>
            <person name="Itoh T."/>
            <person name="Shigeta K."/>
            <person name="Senba T."/>
            <person name="Matsumura K."/>
            <person name="Nakajima Y."/>
            <person name="Mizuno T."/>
            <person name="Morinaga M."/>
            <person name="Sasaki M."/>
            <person name="Togashi T."/>
            <person name="Oyama M."/>
            <person name="Hata H."/>
            <person name="Watanabe M."/>
            <person name="Komatsu T."/>
            <person name="Mizushima-Sugano J."/>
            <person name="Satoh T."/>
            <person name="Shirai Y."/>
            <person name="Takahashi Y."/>
            <person name="Nakagawa K."/>
            <person name="Okumura K."/>
            <person name="Nagase T."/>
            <person name="Nomura N."/>
            <person name="Kikuchi H."/>
            <person name="Masuho Y."/>
            <person name="Yamashita R."/>
            <person name="Nakai K."/>
            <person name="Yada T."/>
            <person name="Nakamura Y."/>
            <person name="Ohara O."/>
            <person name="Isogai T."/>
            <person name="Sugano S."/>
        </authorList>
    </citation>
    <scope>NUCLEOTIDE SEQUENCE [LARGE SCALE MRNA] (ISOFORM 1)</scope>
    <scope>VARIANT ASP-379</scope>
    <source>
        <tissue>Neuroblastoma</tissue>
    </source>
</reference>
<reference key="2">
    <citation type="journal article" date="2007" name="BMC Genomics">
        <title>The full-ORF clone resource of the German cDNA consortium.</title>
        <authorList>
            <person name="Bechtel S."/>
            <person name="Rosenfelder H."/>
            <person name="Duda A."/>
            <person name="Schmidt C.P."/>
            <person name="Ernst U."/>
            <person name="Wellenreuther R."/>
            <person name="Mehrle A."/>
            <person name="Schuster C."/>
            <person name="Bahr A."/>
            <person name="Bloecker H."/>
            <person name="Heubner D."/>
            <person name="Hoerlein A."/>
            <person name="Michel G."/>
            <person name="Wedler H."/>
            <person name="Koehrer K."/>
            <person name="Ottenwaelder B."/>
            <person name="Poustka A."/>
            <person name="Wiemann S."/>
            <person name="Schupp I."/>
        </authorList>
    </citation>
    <scope>NUCLEOTIDE SEQUENCE [LARGE SCALE MRNA] (ISOFORM 1)</scope>
    <source>
        <tissue>Heart</tissue>
    </source>
</reference>
<reference key="3">
    <citation type="journal article" date="2003" name="Nature">
        <title>The DNA sequence and analysis of human chromosome 6.</title>
        <authorList>
            <person name="Mungall A.J."/>
            <person name="Palmer S.A."/>
            <person name="Sims S.K."/>
            <person name="Edwards C.A."/>
            <person name="Ashurst J.L."/>
            <person name="Wilming L."/>
            <person name="Jones M.C."/>
            <person name="Horton R."/>
            <person name="Hunt S.E."/>
            <person name="Scott C.E."/>
            <person name="Gilbert J.G.R."/>
            <person name="Clamp M.E."/>
            <person name="Bethel G."/>
            <person name="Milne S."/>
            <person name="Ainscough R."/>
            <person name="Almeida J.P."/>
            <person name="Ambrose K.D."/>
            <person name="Andrews T.D."/>
            <person name="Ashwell R.I.S."/>
            <person name="Babbage A.K."/>
            <person name="Bagguley C.L."/>
            <person name="Bailey J."/>
            <person name="Banerjee R."/>
            <person name="Barker D.J."/>
            <person name="Barlow K.F."/>
            <person name="Bates K."/>
            <person name="Beare D.M."/>
            <person name="Beasley H."/>
            <person name="Beasley O."/>
            <person name="Bird C.P."/>
            <person name="Blakey S.E."/>
            <person name="Bray-Allen S."/>
            <person name="Brook J."/>
            <person name="Brown A.J."/>
            <person name="Brown J.Y."/>
            <person name="Burford D.C."/>
            <person name="Burrill W."/>
            <person name="Burton J."/>
            <person name="Carder C."/>
            <person name="Carter N.P."/>
            <person name="Chapman J.C."/>
            <person name="Clark S.Y."/>
            <person name="Clark G."/>
            <person name="Clee C.M."/>
            <person name="Clegg S."/>
            <person name="Cobley V."/>
            <person name="Collier R.E."/>
            <person name="Collins J.E."/>
            <person name="Colman L.K."/>
            <person name="Corby N.R."/>
            <person name="Coville G.J."/>
            <person name="Culley K.M."/>
            <person name="Dhami P."/>
            <person name="Davies J."/>
            <person name="Dunn M."/>
            <person name="Earthrowl M.E."/>
            <person name="Ellington A.E."/>
            <person name="Evans K.A."/>
            <person name="Faulkner L."/>
            <person name="Francis M.D."/>
            <person name="Frankish A."/>
            <person name="Frankland J."/>
            <person name="French L."/>
            <person name="Garner P."/>
            <person name="Garnett J."/>
            <person name="Ghori M.J."/>
            <person name="Gilby L.M."/>
            <person name="Gillson C.J."/>
            <person name="Glithero R.J."/>
            <person name="Grafham D.V."/>
            <person name="Grant M."/>
            <person name="Gribble S."/>
            <person name="Griffiths C."/>
            <person name="Griffiths M.N.D."/>
            <person name="Hall R."/>
            <person name="Halls K.S."/>
            <person name="Hammond S."/>
            <person name="Harley J.L."/>
            <person name="Hart E.A."/>
            <person name="Heath P.D."/>
            <person name="Heathcott R."/>
            <person name="Holmes S.J."/>
            <person name="Howden P.J."/>
            <person name="Howe K.L."/>
            <person name="Howell G.R."/>
            <person name="Huckle E."/>
            <person name="Humphray S.J."/>
            <person name="Humphries M.D."/>
            <person name="Hunt A.R."/>
            <person name="Johnson C.M."/>
            <person name="Joy A.A."/>
            <person name="Kay M."/>
            <person name="Keenan S.J."/>
            <person name="Kimberley A.M."/>
            <person name="King A."/>
            <person name="Laird G.K."/>
            <person name="Langford C."/>
            <person name="Lawlor S."/>
            <person name="Leongamornlert D.A."/>
            <person name="Leversha M."/>
            <person name="Lloyd C.R."/>
            <person name="Lloyd D.M."/>
            <person name="Loveland J.E."/>
            <person name="Lovell J."/>
            <person name="Martin S."/>
            <person name="Mashreghi-Mohammadi M."/>
            <person name="Maslen G.L."/>
            <person name="Matthews L."/>
            <person name="McCann O.T."/>
            <person name="McLaren S.J."/>
            <person name="McLay K."/>
            <person name="McMurray A."/>
            <person name="Moore M.J.F."/>
            <person name="Mullikin J.C."/>
            <person name="Niblett D."/>
            <person name="Nickerson T."/>
            <person name="Novik K.L."/>
            <person name="Oliver K."/>
            <person name="Overton-Larty E.K."/>
            <person name="Parker A."/>
            <person name="Patel R."/>
            <person name="Pearce A.V."/>
            <person name="Peck A.I."/>
            <person name="Phillimore B.J.C.T."/>
            <person name="Phillips S."/>
            <person name="Plumb R.W."/>
            <person name="Porter K.M."/>
            <person name="Ramsey Y."/>
            <person name="Ranby S.A."/>
            <person name="Rice C.M."/>
            <person name="Ross M.T."/>
            <person name="Searle S.M."/>
            <person name="Sehra H.K."/>
            <person name="Sheridan E."/>
            <person name="Skuce C.D."/>
            <person name="Smith S."/>
            <person name="Smith M."/>
            <person name="Spraggon L."/>
            <person name="Squares S.L."/>
            <person name="Steward C.A."/>
            <person name="Sycamore N."/>
            <person name="Tamlyn-Hall G."/>
            <person name="Tester J."/>
            <person name="Theaker A.J."/>
            <person name="Thomas D.W."/>
            <person name="Thorpe A."/>
            <person name="Tracey A."/>
            <person name="Tromans A."/>
            <person name="Tubby B."/>
            <person name="Wall M."/>
            <person name="Wallis J.M."/>
            <person name="West A.P."/>
            <person name="White S.S."/>
            <person name="Whitehead S.L."/>
            <person name="Whittaker H."/>
            <person name="Wild A."/>
            <person name="Willey D.J."/>
            <person name="Wilmer T.E."/>
            <person name="Wood J.M."/>
            <person name="Wray P.W."/>
            <person name="Wyatt J.C."/>
            <person name="Young L."/>
            <person name="Younger R.M."/>
            <person name="Bentley D.R."/>
            <person name="Coulson A."/>
            <person name="Durbin R.M."/>
            <person name="Hubbard T."/>
            <person name="Sulston J.E."/>
            <person name="Dunham I."/>
            <person name="Rogers J."/>
            <person name="Beck S."/>
        </authorList>
    </citation>
    <scope>NUCLEOTIDE SEQUENCE [LARGE SCALE GENOMIC DNA]</scope>
</reference>
<reference key="4">
    <citation type="journal article" date="2004" name="Genome Res.">
        <title>The status, quality, and expansion of the NIH full-length cDNA project: the Mammalian Gene Collection (MGC).</title>
        <authorList>
            <consortium name="The MGC Project Team"/>
        </authorList>
    </citation>
    <scope>NUCLEOTIDE SEQUENCE [LARGE SCALE MRNA] (ISOFORMS 1 AND 2)</scope>
    <source>
        <tissue>Duodenum</tissue>
        <tissue>Uterus</tissue>
    </source>
</reference>
<reference key="5">
    <citation type="journal article" date="2009" name="Science">
        <title>Lysine acetylation targets protein complexes and co-regulates major cellular functions.</title>
        <authorList>
            <person name="Choudhary C."/>
            <person name="Kumar C."/>
            <person name="Gnad F."/>
            <person name="Nielsen M.L."/>
            <person name="Rehman M."/>
            <person name="Walther T.C."/>
            <person name="Olsen J.V."/>
            <person name="Mann M."/>
        </authorList>
    </citation>
    <scope>ACETYLATION [LARGE SCALE ANALYSIS] AT LYS-262</scope>
    <scope>IDENTIFICATION BY MASS SPECTROMETRY [LARGE SCALE ANALYSIS]</scope>
</reference>
<reference key="6">
    <citation type="journal article" date="2018" name="Nat. Commun.">
        <title>Reactive-site-centric chemoproteomics identifies a distinct class of deubiquitinase enzymes.</title>
        <authorList>
            <person name="Hewings D.S."/>
            <person name="Heideker J."/>
            <person name="Ma T.P."/>
            <person name="AhYoung A.P."/>
            <person name="El Oualid F."/>
            <person name="Amore A."/>
            <person name="Costakes G.T."/>
            <person name="Kirchhofer D."/>
            <person name="Brasher B."/>
            <person name="Pillow T."/>
            <person name="Popovych N."/>
            <person name="Maurer T."/>
            <person name="Schwerdtfeger C."/>
            <person name="Forrest W.F."/>
            <person name="Yu K."/>
            <person name="Flygare J."/>
            <person name="Bogyo M."/>
            <person name="Wertz I.E."/>
        </authorList>
    </citation>
    <scope>FUNCTION</scope>
    <scope>MUTAGENESIS OF CYS-360 AND HIS-491</scope>
    <scope>INTERACTION WITH RPA1 AND RPA2</scope>
</reference>
<reference key="7">
    <citation type="journal article" date="2018" name="Mol. Cell">
        <title>Discovery and characterization of ZUFSP/ZUP1, a distinct deubiquitinase class important for genome stability.</title>
        <authorList>
            <person name="Kwasna D."/>
            <person name="Abdul Rehman S.A."/>
            <person name="Natarajan J."/>
            <person name="Matthews S."/>
            <person name="Madden R."/>
            <person name="De Cesare V."/>
            <person name="Weidlich S."/>
            <person name="Virdee S."/>
            <person name="Ahel I."/>
            <person name="Gibbs-Seymour I."/>
            <person name="Kulathu Y."/>
        </authorList>
    </citation>
    <scope>X-RAY CRYSTALLOGRAPHY (1.74 ANGSTROMS) OF 231-578</scope>
    <scope>FUNCTION</scope>
    <scope>MUTAGENESIS OF CYS-360; GLN-487; HIS-491 AND ASP-512</scope>
</reference>
<reference key="8">
    <citation type="journal article" date="2018" name="Mol. Cell">
        <title>ZUFSP deubiquitylates K63-linked polyubiquitin chains to promote genome stability.</title>
        <authorList>
            <person name="Haahr P."/>
            <person name="Borgermann N."/>
            <person name="Guo X."/>
            <person name="Typas D."/>
            <person name="Achuthankutty D."/>
            <person name="Hoffmann S."/>
            <person name="Shearer R."/>
            <person name="Sixma T.K."/>
            <person name="Mailand N."/>
        </authorList>
    </citation>
    <scope>FUNCTION</scope>
    <scope>CATALYTIC ACTIVITY</scope>
    <scope>BIOPHYSICOCHEMICAL PROPERTIES</scope>
    <scope>MUTAGENESIS OF CYS-360</scope>
    <scope>DOMAIN</scope>
    <scope>SUBCELLULAR LOCATION</scope>
</reference>
<reference key="9">
    <citation type="journal article" date="2018" name="Nat. Commun.">
        <title>A family of unconventional deubiquitinases with modular chain specificity determinants.</title>
        <authorList>
            <person name="Hermanns T."/>
            <person name="Pichlo C."/>
            <person name="Woiwode I."/>
            <person name="Klopffleisch K."/>
            <person name="Witting K.F."/>
            <person name="Ovaa H."/>
            <person name="Baumann U."/>
            <person name="Hofmann K."/>
        </authorList>
    </citation>
    <scope>X-RAY CRYSTALLOGRAPHY (1.73 ANGSTROMS) OF 232-578</scope>
    <scope>FUNCTION</scope>
    <scope>CATALYTIC ACTIVITY</scope>
    <scope>BIOPHYSICOCHEMICAL PROPERTIES</scope>
    <scope>DOMAIN</scope>
    <scope>ACTIVE SITE</scope>
    <scope>MUTAGENESIS OF SER-351; CYS-360; ASP-406; GLU-428 AND HIS-491</scope>
    <scope>SUBCELLULAR LOCATION</scope>
</reference>
<evidence type="ECO:0000250" key="1">
    <source>
        <dbReference type="UniProtKB" id="Q99K23"/>
    </source>
</evidence>
<evidence type="ECO:0000255" key="2">
    <source>
        <dbReference type="PROSITE-ProRule" id="PRU00042"/>
    </source>
</evidence>
<evidence type="ECO:0000269" key="3">
    <source>
    </source>
</evidence>
<evidence type="ECO:0000269" key="4">
    <source>
    </source>
</evidence>
<evidence type="ECO:0000269" key="5">
    <source>
    </source>
</evidence>
<evidence type="ECO:0000269" key="6">
    <source>
    </source>
</evidence>
<evidence type="ECO:0000269" key="7">
    <source>
    </source>
</evidence>
<evidence type="ECO:0000303" key="8">
    <source>
    </source>
</evidence>
<evidence type="ECO:0000305" key="9"/>
<evidence type="ECO:0000305" key="10">
    <source>
    </source>
</evidence>
<evidence type="ECO:0000305" key="11">
    <source>
    </source>
</evidence>
<evidence type="ECO:0000312" key="12">
    <source>
        <dbReference type="HGNC" id="HGNC:21224"/>
    </source>
</evidence>
<evidence type="ECO:0007744" key="13">
    <source>
    </source>
</evidence>
<evidence type="ECO:0007829" key="14">
    <source>
        <dbReference type="PDB" id="6EI1"/>
    </source>
</evidence>
<accession>Q96AP4</accession>
<accession>Q5TD92</accession>
<accession>Q6PJH7</accession>
<accession>Q96NV6</accession>
<proteinExistence type="evidence at protein level"/>
<name>ZUP1_HUMAN</name>
<dbReference type="EC" id="3.4.19.12" evidence="4"/>
<dbReference type="EMBL" id="AK054582">
    <property type="protein sequence ID" value="BAB70765.1"/>
    <property type="molecule type" value="mRNA"/>
</dbReference>
<dbReference type="EMBL" id="BX537872">
    <property type="protein sequence ID" value="CAD97873.1"/>
    <property type="molecule type" value="mRNA"/>
</dbReference>
<dbReference type="EMBL" id="AL132795">
    <property type="status" value="NOT_ANNOTATED_CDS"/>
    <property type="molecule type" value="Genomic_DNA"/>
</dbReference>
<dbReference type="EMBL" id="BC015420">
    <property type="protein sequence ID" value="AAH15420.1"/>
    <property type="molecule type" value="mRNA"/>
</dbReference>
<dbReference type="EMBL" id="BC016879">
    <property type="protein sequence ID" value="AAH16879.1"/>
    <property type="molecule type" value="mRNA"/>
</dbReference>
<dbReference type="CCDS" id="CCDS5110.1">
    <molecule id="Q96AP4-1"/>
</dbReference>
<dbReference type="RefSeq" id="NP_001348118.1">
    <molecule id="Q96AP4-1"/>
    <property type="nucleotide sequence ID" value="NM_001361189.2"/>
</dbReference>
<dbReference type="RefSeq" id="NP_659499.2">
    <molecule id="Q96AP4-1"/>
    <property type="nucleotide sequence ID" value="NM_145062.3"/>
</dbReference>
<dbReference type="RefSeq" id="XP_011533867.1">
    <property type="nucleotide sequence ID" value="XM_011535565.2"/>
</dbReference>
<dbReference type="PDB" id="6EI1">
    <property type="method" value="X-ray"/>
    <property type="resolution" value="1.73 A"/>
    <property type="chains" value="A=232-578"/>
</dbReference>
<dbReference type="PDB" id="6FGE">
    <property type="method" value="X-ray"/>
    <property type="resolution" value="1.74 A"/>
    <property type="chains" value="A=231-578"/>
</dbReference>
<dbReference type="PDBsum" id="6EI1"/>
<dbReference type="PDBsum" id="6FGE"/>
<dbReference type="SMR" id="Q96AP4"/>
<dbReference type="BioGRID" id="128708">
    <property type="interactions" value="172"/>
</dbReference>
<dbReference type="FunCoup" id="Q96AP4">
    <property type="interactions" value="1919"/>
</dbReference>
<dbReference type="IntAct" id="Q96AP4">
    <property type="interactions" value="9"/>
</dbReference>
<dbReference type="MINT" id="Q96AP4"/>
<dbReference type="STRING" id="9606.ENSP00000357565"/>
<dbReference type="MEROPS" id="C78.003"/>
<dbReference type="GlyGen" id="Q96AP4">
    <property type="glycosylation" value="1 site, 1 O-linked glycan (1 site)"/>
</dbReference>
<dbReference type="iPTMnet" id="Q96AP4"/>
<dbReference type="PhosphoSitePlus" id="Q96AP4"/>
<dbReference type="BioMuta" id="ZUFSP"/>
<dbReference type="DMDM" id="74762646"/>
<dbReference type="jPOST" id="Q96AP4"/>
<dbReference type="MassIVE" id="Q96AP4"/>
<dbReference type="PaxDb" id="9606-ENSP00000357565"/>
<dbReference type="PeptideAtlas" id="Q96AP4"/>
<dbReference type="ProteomicsDB" id="75981">
    <molecule id="Q96AP4-1"/>
</dbReference>
<dbReference type="ProteomicsDB" id="75982">
    <molecule id="Q96AP4-2"/>
</dbReference>
<dbReference type="Pumba" id="Q96AP4"/>
<dbReference type="Antibodypedia" id="32518">
    <property type="antibodies" value="108 antibodies from 18 providers"/>
</dbReference>
<dbReference type="DNASU" id="221302"/>
<dbReference type="Ensembl" id="ENST00000368576.8">
    <molecule id="Q96AP4-1"/>
    <property type="protein sequence ID" value="ENSP00000357565.3"/>
    <property type="gene ID" value="ENSG00000153975.10"/>
</dbReference>
<dbReference type="GeneID" id="221302"/>
<dbReference type="KEGG" id="hsa:221302"/>
<dbReference type="MANE-Select" id="ENST00000368576.8">
    <property type="protein sequence ID" value="ENSP00000357565.3"/>
    <property type="RefSeq nucleotide sequence ID" value="NM_145062.3"/>
    <property type="RefSeq protein sequence ID" value="NP_659499.2"/>
</dbReference>
<dbReference type="UCSC" id="uc003pxf.3">
    <molecule id="Q96AP4-1"/>
    <property type="organism name" value="human"/>
</dbReference>
<dbReference type="AGR" id="HGNC:21224"/>
<dbReference type="CTD" id="221302"/>
<dbReference type="DisGeNET" id="221302"/>
<dbReference type="GeneCards" id="ZUP1"/>
<dbReference type="HGNC" id="HGNC:21224">
    <property type="gene designation" value="ZUP1"/>
</dbReference>
<dbReference type="HPA" id="ENSG00000153975">
    <property type="expression patterns" value="Low tissue specificity"/>
</dbReference>
<dbReference type="MIM" id="620543">
    <property type="type" value="gene"/>
</dbReference>
<dbReference type="neXtProt" id="NX_Q96AP4"/>
<dbReference type="OpenTargets" id="ENSG00000153975"/>
<dbReference type="PharmGKB" id="PA162411072"/>
<dbReference type="VEuPathDB" id="HostDB:ENSG00000153975"/>
<dbReference type="eggNOG" id="KOG4696">
    <property type="taxonomic scope" value="Eukaryota"/>
</dbReference>
<dbReference type="GeneTree" id="ENSGT00390000008232"/>
<dbReference type="HOGENOM" id="CLU_017060_1_1_1"/>
<dbReference type="InParanoid" id="Q96AP4"/>
<dbReference type="OMA" id="CGSKAWI"/>
<dbReference type="OrthoDB" id="288987at2759"/>
<dbReference type="PAN-GO" id="Q96AP4">
    <property type="GO annotations" value="2 GO annotations based on evolutionary models"/>
</dbReference>
<dbReference type="PhylomeDB" id="Q96AP4"/>
<dbReference type="TreeFam" id="TF323699"/>
<dbReference type="PathwayCommons" id="Q96AP4"/>
<dbReference type="SABIO-RK" id="Q96AP4"/>
<dbReference type="SignaLink" id="Q96AP4"/>
<dbReference type="BioGRID-ORCS" id="221302">
    <property type="hits" value="10 hits in 1162 CRISPR screens"/>
</dbReference>
<dbReference type="GenomeRNAi" id="221302"/>
<dbReference type="Pharos" id="Q96AP4">
    <property type="development level" value="Tbio"/>
</dbReference>
<dbReference type="PRO" id="PR:Q96AP4"/>
<dbReference type="Proteomes" id="UP000005640">
    <property type="component" value="Chromosome 6"/>
</dbReference>
<dbReference type="RNAct" id="Q96AP4">
    <property type="molecule type" value="protein"/>
</dbReference>
<dbReference type="Bgee" id="ENSG00000153975">
    <property type="expression patterns" value="Expressed in secondary oocyte and 166 other cell types or tissues"/>
</dbReference>
<dbReference type="ExpressionAtlas" id="Q96AP4">
    <property type="expression patterns" value="baseline and differential"/>
</dbReference>
<dbReference type="GO" id="GO:0005829">
    <property type="term" value="C:cytosol"/>
    <property type="evidence" value="ECO:0000314"/>
    <property type="project" value="HPA"/>
</dbReference>
<dbReference type="GO" id="GO:0005654">
    <property type="term" value="C:nucleoplasm"/>
    <property type="evidence" value="ECO:0000314"/>
    <property type="project" value="HPA"/>
</dbReference>
<dbReference type="GO" id="GO:0004843">
    <property type="term" value="F:cysteine-type deubiquitinase activity"/>
    <property type="evidence" value="ECO:0007669"/>
    <property type="project" value="UniProtKB-EC"/>
</dbReference>
<dbReference type="GO" id="GO:0008270">
    <property type="term" value="F:zinc ion binding"/>
    <property type="evidence" value="ECO:0007669"/>
    <property type="project" value="UniProtKB-KW"/>
</dbReference>
<dbReference type="FunFam" id="3.90.70.130:FF:000002">
    <property type="entry name" value="Zinc finger containing ubiquitin peptidase 1"/>
    <property type="match status" value="1"/>
</dbReference>
<dbReference type="Gene3D" id="3.90.70.130">
    <property type="match status" value="1"/>
</dbReference>
<dbReference type="Gene3D" id="3.30.160.60">
    <property type="entry name" value="Classic Zinc Finger"/>
    <property type="match status" value="1"/>
</dbReference>
<dbReference type="InterPro" id="IPR012462">
    <property type="entry name" value="UfSP1/2_DUB_cat"/>
</dbReference>
<dbReference type="InterPro" id="IPR050688">
    <property type="entry name" value="Zinc_finger/UBP_domain"/>
</dbReference>
<dbReference type="InterPro" id="IPR013087">
    <property type="entry name" value="Znf_C2H2_type"/>
</dbReference>
<dbReference type="PANTHER" id="PTHR24403">
    <property type="entry name" value="ZINC FINGER PROTEIN"/>
    <property type="match status" value="1"/>
</dbReference>
<dbReference type="PANTHER" id="PTHR24403:SF82">
    <property type="entry name" value="ZINC FINGER-CONTAINING UBIQUITIN PEPTIDASE 1"/>
    <property type="match status" value="1"/>
</dbReference>
<dbReference type="Pfam" id="PF07910">
    <property type="entry name" value="Peptidase_C78"/>
    <property type="match status" value="1"/>
</dbReference>
<dbReference type="SMART" id="SM00355">
    <property type="entry name" value="ZnF_C2H2"/>
    <property type="match status" value="4"/>
</dbReference>
<dbReference type="PROSITE" id="PS00028">
    <property type="entry name" value="ZINC_FINGER_C2H2_1"/>
    <property type="match status" value="2"/>
</dbReference>
<dbReference type="PROSITE" id="PS50157">
    <property type="entry name" value="ZINC_FINGER_C2H2_2"/>
    <property type="match status" value="1"/>
</dbReference>
<comment type="function">
    <text evidence="4 5 6 7">Deubiquitinase with endodeubiquitinase activity that specifically interacts with and cleaves 'Lys-63'-linked long polyubiquitin chains. Shows only weak activity against 'Lys-11' and 'Lys-48'-linked chains (PubMed:29476094, PubMed:29563501, PubMed:29576528). Plays an important role in genome stability pathways, functioning to prevent spontaneous DNA damage and also promote cellular survival in response to exogenous DNA damage (PubMed:29576527, PubMed:29576528). Modulates the ubiquitination status of replication protein A (RPA) complex proteins in response to replication stress (PubMed:29563501).</text>
</comment>
<comment type="catalytic activity">
    <reaction evidence="4 7">
        <text>Thiol-dependent hydrolysis of ester, thioester, amide, peptide and isopeptide bonds formed by the C-terminal Gly of ubiquitin (a 76-residue protein attached to proteins as an intracellular targeting signal).</text>
        <dbReference type="EC" id="3.4.19.12"/>
    </reaction>
</comment>
<comment type="biophysicochemical properties">
    <kinetics>
        <KM evidence="4">50.4 uM for Arg-Leu-Arg-Gly-Gly-AMC</KM>
        <KM evidence="7">4.9 uM for Ub-Rhodamine</KM>
        <text evidence="4 7">kcat is 4.9 sec(-1) with Arg-Leu-Arg-Gly-Gly-AMC as substrate (PubMed:29476094). kcat is 0.084 sec(-1) with Ub-Rhodamine as substrate (PubMed:29576528).</text>
    </kinetics>
</comment>
<comment type="subunit">
    <text evidence="5">Interacts with RPA1 and RPA2.</text>
</comment>
<comment type="interaction">
    <interactant intactId="EBI-744706">
        <id>Q96AP4</id>
    </interactant>
    <interactant intactId="EBI-2825900">
        <id>Q92619</id>
        <label>ARHGAP45</label>
    </interactant>
    <organismsDiffer>false</organismsDiffer>
    <experiments>3</experiments>
</comment>
<comment type="interaction">
    <interactant intactId="EBI-744706">
        <id>Q96AP4</id>
    </interactant>
    <interactant intactId="EBI-992788">
        <id>P50281</id>
        <label>MMP14</label>
    </interactant>
    <organismsDiffer>false</organismsDiffer>
    <experiments>3</experiments>
</comment>
<comment type="interaction">
    <interactant intactId="EBI-744706">
        <id>Q96AP4</id>
    </interactant>
    <interactant intactId="EBI-10276945">
        <id>Q8WVC2</id>
        <label>RPS21</label>
    </interactant>
    <organismsDiffer>false</organismsDiffer>
    <experiments>3</experiments>
</comment>
<comment type="subcellular location">
    <subcellularLocation>
        <location evidence="4">Cytoplasm</location>
    </subcellularLocation>
    <subcellularLocation>
        <location evidence="4 6 7">Nucleus</location>
    </subcellularLocation>
    <text evidence="6 7">Mostly present in the nuclear fraction. Localizes to DNA lesions.</text>
</comment>
<comment type="alternative products">
    <event type="alternative splicing"/>
    <isoform>
        <id>Q96AP4-1</id>
        <name>1</name>
        <sequence type="displayed"/>
    </isoform>
    <isoform>
        <id>Q96AP4-2</id>
        <name>2</name>
        <sequence type="described" ref="VSP_019533"/>
    </isoform>
</comment>
<comment type="domain">
    <text evidence="7 10 11">The motif interacting with ubiquitin (MIU) and ZUFSP ubiquitin-binding domain (zUBD, also called ZUFSP helical arm ZHA) are responsible for binding the distal (outgoing) ubiquitin units S1 and S2 respectively.</text>
</comment>
<comment type="domain">
    <text evidence="7 11">C2H2-type zinc finger 4 is a ubiquitin-binding zinc finger (UBZ) and required for polyubiquitin binding, possibly binding the proximal ubiqutin, and for catalytic activity (Probable) (PubMed:29576528). C2H2-type zinc fingers 1-3 are required for localization to sites of DNA damage (PubMed:29576528).</text>
</comment>
<comment type="similarity">
    <text evidence="9">Belongs to the peptidase C78 family. ZUFSP subfamily.</text>
</comment>
<gene>
    <name evidence="12" type="primary">ZUP1</name>
    <name type="synonym">C6orf113</name>
    <name evidence="12" type="synonym">ZUFSP</name>
</gene>